<gene>
    <name evidence="1" type="primary">hemF</name>
    <name type="ordered locus">Xfasm12_0017</name>
</gene>
<reference key="1">
    <citation type="journal article" date="2010" name="J. Bacteriol.">
        <title>Whole genome sequences of two Xylella fastidiosa strains (M12 and M23) causing almond leaf scorch disease in California.</title>
        <authorList>
            <person name="Chen J."/>
            <person name="Xie G."/>
            <person name="Han S."/>
            <person name="Chertkov O."/>
            <person name="Sims D."/>
            <person name="Civerolo E.L."/>
        </authorList>
    </citation>
    <scope>NUCLEOTIDE SEQUENCE [LARGE SCALE GENOMIC DNA]</scope>
    <source>
        <strain>M12</strain>
    </source>
</reference>
<name>HEM6_XYLFM</name>
<feature type="chain" id="PRO_1000119835" description="Oxygen-dependent coproporphyrinogen-III oxidase">
    <location>
        <begin position="1"/>
        <end position="305"/>
    </location>
</feature>
<feature type="region of interest" description="Important for dimerization" evidence="1">
    <location>
        <begin position="239"/>
        <end position="274"/>
    </location>
</feature>
<feature type="active site" description="Proton donor" evidence="1">
    <location>
        <position position="106"/>
    </location>
</feature>
<feature type="binding site" evidence="1">
    <location>
        <position position="92"/>
    </location>
    <ligand>
        <name>substrate</name>
    </ligand>
</feature>
<feature type="binding site" evidence="1">
    <location>
        <position position="96"/>
    </location>
    <ligand>
        <name>a divalent metal cation</name>
        <dbReference type="ChEBI" id="CHEBI:60240"/>
    </ligand>
</feature>
<feature type="binding site" evidence="1">
    <location>
        <position position="106"/>
    </location>
    <ligand>
        <name>a divalent metal cation</name>
        <dbReference type="ChEBI" id="CHEBI:60240"/>
    </ligand>
</feature>
<feature type="binding site" evidence="1">
    <location>
        <begin position="108"/>
        <end position="110"/>
    </location>
    <ligand>
        <name>substrate</name>
    </ligand>
</feature>
<feature type="binding site" evidence="1">
    <location>
        <position position="145"/>
    </location>
    <ligand>
        <name>a divalent metal cation</name>
        <dbReference type="ChEBI" id="CHEBI:60240"/>
    </ligand>
</feature>
<feature type="binding site" evidence="1">
    <location>
        <position position="175"/>
    </location>
    <ligand>
        <name>a divalent metal cation</name>
        <dbReference type="ChEBI" id="CHEBI:60240"/>
    </ligand>
</feature>
<feature type="binding site" evidence="1">
    <location>
        <begin position="257"/>
        <end position="259"/>
    </location>
    <ligand>
        <name>substrate</name>
    </ligand>
</feature>
<feature type="site" description="Important for dimerization" evidence="1">
    <location>
        <position position="175"/>
    </location>
</feature>
<evidence type="ECO:0000255" key="1">
    <source>
        <dbReference type="HAMAP-Rule" id="MF_00333"/>
    </source>
</evidence>
<organism>
    <name type="scientific">Xylella fastidiosa (strain M12)</name>
    <dbReference type="NCBI Taxonomy" id="405440"/>
    <lineage>
        <taxon>Bacteria</taxon>
        <taxon>Pseudomonadati</taxon>
        <taxon>Pseudomonadota</taxon>
        <taxon>Gammaproteobacteria</taxon>
        <taxon>Lysobacterales</taxon>
        <taxon>Lysobacteraceae</taxon>
        <taxon>Xylella</taxon>
    </lineage>
</organism>
<accession>B0U1G5</accession>
<comment type="function">
    <text evidence="1">Involved in the heme biosynthesis. Catalyzes the aerobic oxidative decarboxylation of propionate groups of rings A and B of coproporphyrinogen-III to yield the vinyl groups in protoporphyrinogen-IX.</text>
</comment>
<comment type="catalytic activity">
    <reaction evidence="1">
        <text>coproporphyrinogen III + O2 + 2 H(+) = protoporphyrinogen IX + 2 CO2 + 2 H2O</text>
        <dbReference type="Rhea" id="RHEA:18257"/>
        <dbReference type="ChEBI" id="CHEBI:15377"/>
        <dbReference type="ChEBI" id="CHEBI:15378"/>
        <dbReference type="ChEBI" id="CHEBI:15379"/>
        <dbReference type="ChEBI" id="CHEBI:16526"/>
        <dbReference type="ChEBI" id="CHEBI:57307"/>
        <dbReference type="ChEBI" id="CHEBI:57309"/>
        <dbReference type="EC" id="1.3.3.3"/>
    </reaction>
</comment>
<comment type="cofactor">
    <cofactor evidence="1">
        <name>a divalent metal cation</name>
        <dbReference type="ChEBI" id="CHEBI:60240"/>
    </cofactor>
</comment>
<comment type="pathway">
    <text evidence="1">Porphyrin-containing compound metabolism; protoporphyrin-IX biosynthesis; protoporphyrinogen-IX from coproporphyrinogen-III (O2 route): step 1/1.</text>
</comment>
<comment type="subunit">
    <text evidence="1">Homodimer.</text>
</comment>
<comment type="subcellular location">
    <subcellularLocation>
        <location evidence="1">Cytoplasm</location>
    </subcellularLocation>
</comment>
<comment type="similarity">
    <text evidence="1">Belongs to the aerobic coproporphyrinogen-III oxidase family.</text>
</comment>
<sequence>MSDFDRVRDYLTALQDRICNVVETIDGQSHFHEDHWQRTEGGGGRTRLLRDGAVFEQAAIGFSDVCGTHLPPSASVRRPELAGANWRACGVSLVFHPKNPFVPTTHLNVRYFRAEREGKQVAAWFGGGFDLTPFYPFDEDVVHWHRVARDLCAPFGDERYAAHKRWCDEYFVLRHRNETRGVGGLFFDDLDKDFERDFDYQRAVGDGFLDAYFPIVTRRHDTPYGDRERAFQLYRRGRYVEFNLLFDRGTLFGLQSGGRAESILISLPPLVRWEYGYHPLPGSAEARLADYLLPRDWLEESRICE</sequence>
<dbReference type="EC" id="1.3.3.3" evidence="1"/>
<dbReference type="EMBL" id="CP000941">
    <property type="protein sequence ID" value="ACA11069.1"/>
    <property type="molecule type" value="Genomic_DNA"/>
</dbReference>
<dbReference type="RefSeq" id="WP_004085079.1">
    <property type="nucleotide sequence ID" value="NC_010513.1"/>
</dbReference>
<dbReference type="SMR" id="B0U1G5"/>
<dbReference type="KEGG" id="xfm:Xfasm12_0017"/>
<dbReference type="HOGENOM" id="CLU_026169_0_1_6"/>
<dbReference type="UniPathway" id="UPA00251">
    <property type="reaction ID" value="UER00322"/>
</dbReference>
<dbReference type="GO" id="GO:0005737">
    <property type="term" value="C:cytoplasm"/>
    <property type="evidence" value="ECO:0007669"/>
    <property type="project" value="UniProtKB-SubCell"/>
</dbReference>
<dbReference type="GO" id="GO:0004109">
    <property type="term" value="F:coproporphyrinogen oxidase activity"/>
    <property type="evidence" value="ECO:0007669"/>
    <property type="project" value="UniProtKB-UniRule"/>
</dbReference>
<dbReference type="GO" id="GO:0046872">
    <property type="term" value="F:metal ion binding"/>
    <property type="evidence" value="ECO:0007669"/>
    <property type="project" value="UniProtKB-KW"/>
</dbReference>
<dbReference type="GO" id="GO:0042803">
    <property type="term" value="F:protein homodimerization activity"/>
    <property type="evidence" value="ECO:0000250"/>
    <property type="project" value="UniProtKB"/>
</dbReference>
<dbReference type="GO" id="GO:0006782">
    <property type="term" value="P:protoporphyrinogen IX biosynthetic process"/>
    <property type="evidence" value="ECO:0007669"/>
    <property type="project" value="UniProtKB-UniRule"/>
</dbReference>
<dbReference type="FunFam" id="3.40.1500.10:FF:000001">
    <property type="entry name" value="Oxygen-dependent coproporphyrinogen-III oxidase"/>
    <property type="match status" value="1"/>
</dbReference>
<dbReference type="Gene3D" id="3.40.1500.10">
    <property type="entry name" value="Coproporphyrinogen III oxidase, aerobic"/>
    <property type="match status" value="1"/>
</dbReference>
<dbReference type="HAMAP" id="MF_00333">
    <property type="entry name" value="Coprogen_oxidas"/>
    <property type="match status" value="1"/>
</dbReference>
<dbReference type="InterPro" id="IPR001260">
    <property type="entry name" value="Coprogen_oxidase_aer"/>
</dbReference>
<dbReference type="InterPro" id="IPR036406">
    <property type="entry name" value="Coprogen_oxidase_aer_sf"/>
</dbReference>
<dbReference type="InterPro" id="IPR018375">
    <property type="entry name" value="Coprogen_oxidase_CS"/>
</dbReference>
<dbReference type="NCBIfam" id="NF003727">
    <property type="entry name" value="PRK05330.1"/>
    <property type="match status" value="1"/>
</dbReference>
<dbReference type="PANTHER" id="PTHR10755">
    <property type="entry name" value="COPROPORPHYRINOGEN III OXIDASE, MITOCHONDRIAL"/>
    <property type="match status" value="1"/>
</dbReference>
<dbReference type="PANTHER" id="PTHR10755:SF0">
    <property type="entry name" value="OXYGEN-DEPENDENT COPROPORPHYRINOGEN-III OXIDASE, MITOCHONDRIAL"/>
    <property type="match status" value="1"/>
</dbReference>
<dbReference type="Pfam" id="PF01218">
    <property type="entry name" value="Coprogen_oxidas"/>
    <property type="match status" value="1"/>
</dbReference>
<dbReference type="PIRSF" id="PIRSF000166">
    <property type="entry name" value="Coproporphyri_ox"/>
    <property type="match status" value="1"/>
</dbReference>
<dbReference type="PRINTS" id="PR00073">
    <property type="entry name" value="COPRGNOXDASE"/>
</dbReference>
<dbReference type="SUPFAM" id="SSF102886">
    <property type="entry name" value="Coproporphyrinogen III oxidase"/>
    <property type="match status" value="1"/>
</dbReference>
<dbReference type="PROSITE" id="PS01021">
    <property type="entry name" value="COPROGEN_OXIDASE"/>
    <property type="match status" value="1"/>
</dbReference>
<proteinExistence type="inferred from homology"/>
<protein>
    <recommendedName>
        <fullName evidence="1">Oxygen-dependent coproporphyrinogen-III oxidase</fullName>
        <shortName evidence="1">CPO</shortName>
        <shortName evidence="1">Coprogen oxidase</shortName>
        <shortName evidence="1">Coproporphyrinogenase</shortName>
        <ecNumber evidence="1">1.3.3.3</ecNumber>
    </recommendedName>
</protein>
<keyword id="KW-0963">Cytoplasm</keyword>
<keyword id="KW-0350">Heme biosynthesis</keyword>
<keyword id="KW-0479">Metal-binding</keyword>
<keyword id="KW-0560">Oxidoreductase</keyword>
<keyword id="KW-0627">Porphyrin biosynthesis</keyword>